<organism>
    <name type="scientific">Mycobacterium avium (strain 104)</name>
    <dbReference type="NCBI Taxonomy" id="243243"/>
    <lineage>
        <taxon>Bacteria</taxon>
        <taxon>Bacillati</taxon>
        <taxon>Actinomycetota</taxon>
        <taxon>Actinomycetes</taxon>
        <taxon>Mycobacteriales</taxon>
        <taxon>Mycobacteriaceae</taxon>
        <taxon>Mycobacterium</taxon>
        <taxon>Mycobacterium avium complex (MAC)</taxon>
    </lineage>
</organism>
<sequence length="556" mass="58394">MSSTTAGLIFLAVLVAALVVVHVPLGDYMFRVYTTDRDLAAERTIYRLIGVDARSEQTWGAYARGVLAFSSVSIIFLFVLQLVQGKLPLHLHDPATKMTPSLAWNTAVSFVTNTNWQAYSGETTQGHLVQMAGLAVQNFVSAAVGMAVAVALVRGFARRRTGELGNFWVDLVRGTLRILLPISIVGAVLLVAGGAIQNFHLHDQVVTTLGGTAQTIPGGPVASQEVIKELGTNGGGFYNANSAHPFENPTAWTNWLEIFLILVIGFSLPRTFGRMVGNPKQGYAIASVMASLYLLSTGFMLWFQLQHHGTVPSAVGAAMEGVEQRFGVPDSGVFAAATTLTSTGAVDSAHDSLTSLGGMITMFNMQLGEVAPGGTGSGLYGMLVLAVITVFVAGLMVGRTPEYLGKKINPREIKLAASYFLVTPLIVLTGTAIAMALPGERAGMANSGPHGLSEVLYAFTSAANNNGSAFAGLSANTEWYNTALGLAMAFGRFLPIVLVLALAGSLARQGSTPDSAGTLPTHRPQFVGMVAGVTLIVVALTFLPMLALGPLAEGIH</sequence>
<gene>
    <name evidence="1" type="primary">kdpA</name>
    <name type="ordered locus">MAV_1173</name>
</gene>
<name>KDPA_MYCA1</name>
<feature type="chain" id="PRO_1000022231" description="Potassium-transporting ATPase potassium-binding subunit">
    <location>
        <begin position="1"/>
        <end position="556"/>
    </location>
</feature>
<feature type="transmembrane region" description="Helical" evidence="1">
    <location>
        <begin position="6"/>
        <end position="26"/>
    </location>
</feature>
<feature type="transmembrane region" description="Helical" evidence="1">
    <location>
        <begin position="65"/>
        <end position="85"/>
    </location>
</feature>
<feature type="transmembrane region" description="Helical" evidence="1">
    <location>
        <begin position="133"/>
        <end position="153"/>
    </location>
</feature>
<feature type="transmembrane region" description="Helical" evidence="1">
    <location>
        <begin position="176"/>
        <end position="196"/>
    </location>
</feature>
<feature type="transmembrane region" description="Helical" evidence="1">
    <location>
        <begin position="249"/>
        <end position="269"/>
    </location>
</feature>
<feature type="transmembrane region" description="Helical" evidence="1">
    <location>
        <begin position="283"/>
        <end position="303"/>
    </location>
</feature>
<feature type="transmembrane region" description="Helical" evidence="1">
    <location>
        <begin position="378"/>
        <end position="398"/>
    </location>
</feature>
<feature type="transmembrane region" description="Helical" evidence="1">
    <location>
        <begin position="419"/>
        <end position="439"/>
    </location>
</feature>
<feature type="transmembrane region" description="Helical" evidence="1">
    <location>
        <begin position="483"/>
        <end position="503"/>
    </location>
</feature>
<feature type="transmembrane region" description="Helical" evidence="1">
    <location>
        <begin position="526"/>
        <end position="546"/>
    </location>
</feature>
<reference key="1">
    <citation type="submission" date="2006-10" db="EMBL/GenBank/DDBJ databases">
        <authorList>
            <person name="Fleischmann R.D."/>
            <person name="Dodson R.J."/>
            <person name="Haft D.H."/>
            <person name="Merkel J.S."/>
            <person name="Nelson W.C."/>
            <person name="Fraser C.M."/>
        </authorList>
    </citation>
    <scope>NUCLEOTIDE SEQUENCE [LARGE SCALE GENOMIC DNA]</scope>
    <source>
        <strain>104</strain>
    </source>
</reference>
<proteinExistence type="inferred from homology"/>
<dbReference type="EMBL" id="CP000479">
    <property type="protein sequence ID" value="ABK68704.1"/>
    <property type="molecule type" value="Genomic_DNA"/>
</dbReference>
<dbReference type="RefSeq" id="WP_009975278.1">
    <property type="nucleotide sequence ID" value="NC_008595.1"/>
</dbReference>
<dbReference type="SMR" id="A0QBY3"/>
<dbReference type="KEGG" id="mav:MAV_1173"/>
<dbReference type="HOGENOM" id="CLU_018614_3_0_11"/>
<dbReference type="Proteomes" id="UP000001574">
    <property type="component" value="Chromosome"/>
</dbReference>
<dbReference type="GO" id="GO:0005886">
    <property type="term" value="C:plasma membrane"/>
    <property type="evidence" value="ECO:0007669"/>
    <property type="project" value="UniProtKB-SubCell"/>
</dbReference>
<dbReference type="GO" id="GO:0008556">
    <property type="term" value="F:P-type potassium transmembrane transporter activity"/>
    <property type="evidence" value="ECO:0007669"/>
    <property type="project" value="InterPro"/>
</dbReference>
<dbReference type="GO" id="GO:0030955">
    <property type="term" value="F:potassium ion binding"/>
    <property type="evidence" value="ECO:0007669"/>
    <property type="project" value="UniProtKB-UniRule"/>
</dbReference>
<dbReference type="HAMAP" id="MF_00275">
    <property type="entry name" value="KdpA"/>
    <property type="match status" value="1"/>
</dbReference>
<dbReference type="InterPro" id="IPR004623">
    <property type="entry name" value="KdpA"/>
</dbReference>
<dbReference type="NCBIfam" id="TIGR00680">
    <property type="entry name" value="kdpA"/>
    <property type="match status" value="1"/>
</dbReference>
<dbReference type="PANTHER" id="PTHR30607">
    <property type="entry name" value="POTASSIUM-TRANSPORTING ATPASE A CHAIN"/>
    <property type="match status" value="1"/>
</dbReference>
<dbReference type="PANTHER" id="PTHR30607:SF2">
    <property type="entry name" value="POTASSIUM-TRANSPORTING ATPASE POTASSIUM-BINDING SUBUNIT"/>
    <property type="match status" value="1"/>
</dbReference>
<dbReference type="Pfam" id="PF03814">
    <property type="entry name" value="KdpA"/>
    <property type="match status" value="1"/>
</dbReference>
<dbReference type="PIRSF" id="PIRSF001294">
    <property type="entry name" value="K_ATPaseA"/>
    <property type="match status" value="1"/>
</dbReference>
<comment type="function">
    <text evidence="1">Part of the high-affinity ATP-driven potassium transport (or Kdp) system, which catalyzes the hydrolysis of ATP coupled with the electrogenic transport of potassium into the cytoplasm. This subunit binds the extracellular potassium ions and delivers the ions to the membrane domain of KdpB through an intramembrane tunnel.</text>
</comment>
<comment type="subunit">
    <text evidence="1">The system is composed of three essential subunits: KdpA, KdpB and KdpC.</text>
</comment>
<comment type="subcellular location">
    <subcellularLocation>
        <location evidence="1">Cell membrane</location>
        <topology evidence="1">Multi-pass membrane protein</topology>
    </subcellularLocation>
</comment>
<comment type="similarity">
    <text evidence="1">Belongs to the KdpA family.</text>
</comment>
<accession>A0QBY3</accession>
<evidence type="ECO:0000255" key="1">
    <source>
        <dbReference type="HAMAP-Rule" id="MF_00275"/>
    </source>
</evidence>
<keyword id="KW-1003">Cell membrane</keyword>
<keyword id="KW-0406">Ion transport</keyword>
<keyword id="KW-0472">Membrane</keyword>
<keyword id="KW-0630">Potassium</keyword>
<keyword id="KW-0633">Potassium transport</keyword>
<keyword id="KW-0812">Transmembrane</keyword>
<keyword id="KW-1133">Transmembrane helix</keyword>
<keyword id="KW-0813">Transport</keyword>
<protein>
    <recommendedName>
        <fullName evidence="1">Potassium-transporting ATPase potassium-binding subunit</fullName>
    </recommendedName>
    <alternativeName>
        <fullName evidence="1">ATP phosphohydrolase [potassium-transporting] A chain</fullName>
    </alternativeName>
    <alternativeName>
        <fullName evidence="1">Potassium-binding and translocating subunit A</fullName>
    </alternativeName>
    <alternativeName>
        <fullName evidence="1">Potassium-translocating ATPase A chain</fullName>
    </alternativeName>
</protein>